<proteinExistence type="inferred from homology"/>
<gene>
    <name evidence="1" type="primary">rsmA</name>
    <name evidence="1" type="synonym">ksgA</name>
    <name type="ordered locus">MAP_0975</name>
</gene>
<evidence type="ECO:0000255" key="1">
    <source>
        <dbReference type="HAMAP-Rule" id="MF_00607"/>
    </source>
</evidence>
<evidence type="ECO:0000256" key="2">
    <source>
        <dbReference type="SAM" id="MobiDB-lite"/>
    </source>
</evidence>
<accession>Q741W2</accession>
<feature type="chain" id="PRO_0000101563" description="Ribosomal RNA small subunit methyltransferase A">
    <location>
        <begin position="1"/>
        <end position="318"/>
    </location>
</feature>
<feature type="region of interest" description="Disordered" evidence="2">
    <location>
        <begin position="295"/>
        <end position="318"/>
    </location>
</feature>
<feature type="compositionally biased region" description="Basic and acidic residues" evidence="2">
    <location>
        <begin position="295"/>
        <end position="305"/>
    </location>
</feature>
<feature type="binding site" evidence="1">
    <location>
        <position position="40"/>
    </location>
    <ligand>
        <name>S-adenosyl-L-methionine</name>
        <dbReference type="ChEBI" id="CHEBI:59789"/>
    </ligand>
</feature>
<feature type="binding site" evidence="1">
    <location>
        <position position="42"/>
    </location>
    <ligand>
        <name>S-adenosyl-L-methionine</name>
        <dbReference type="ChEBI" id="CHEBI:59789"/>
    </ligand>
</feature>
<feature type="binding site" evidence="1">
    <location>
        <position position="67"/>
    </location>
    <ligand>
        <name>S-adenosyl-L-methionine</name>
        <dbReference type="ChEBI" id="CHEBI:59789"/>
    </ligand>
</feature>
<feature type="binding site" evidence="1">
    <location>
        <position position="88"/>
    </location>
    <ligand>
        <name>S-adenosyl-L-methionine</name>
        <dbReference type="ChEBI" id="CHEBI:59789"/>
    </ligand>
</feature>
<feature type="binding site" evidence="1">
    <location>
        <position position="118"/>
    </location>
    <ligand>
        <name>S-adenosyl-L-methionine</name>
        <dbReference type="ChEBI" id="CHEBI:59789"/>
    </ligand>
</feature>
<feature type="binding site" evidence="1">
    <location>
        <position position="137"/>
    </location>
    <ligand>
        <name>S-adenosyl-L-methionine</name>
        <dbReference type="ChEBI" id="CHEBI:59789"/>
    </ligand>
</feature>
<name>RSMA_MYCPA</name>
<comment type="function">
    <text evidence="1">Specifically dimethylates two adjacent adenosines (A1518 and A1519) in the loop of a conserved hairpin near the 3'-end of 16S rRNA in the 30S particle. May play a critical role in biogenesis of 30S subunits.</text>
</comment>
<comment type="catalytic activity">
    <reaction evidence="1">
        <text>adenosine(1518)/adenosine(1519) in 16S rRNA + 4 S-adenosyl-L-methionine = N(6)-dimethyladenosine(1518)/N(6)-dimethyladenosine(1519) in 16S rRNA + 4 S-adenosyl-L-homocysteine + 4 H(+)</text>
        <dbReference type="Rhea" id="RHEA:19609"/>
        <dbReference type="Rhea" id="RHEA-COMP:10232"/>
        <dbReference type="Rhea" id="RHEA-COMP:10233"/>
        <dbReference type="ChEBI" id="CHEBI:15378"/>
        <dbReference type="ChEBI" id="CHEBI:57856"/>
        <dbReference type="ChEBI" id="CHEBI:59789"/>
        <dbReference type="ChEBI" id="CHEBI:74411"/>
        <dbReference type="ChEBI" id="CHEBI:74493"/>
        <dbReference type="EC" id="2.1.1.182"/>
    </reaction>
</comment>
<comment type="subcellular location">
    <subcellularLocation>
        <location evidence="1">Cytoplasm</location>
    </subcellularLocation>
</comment>
<comment type="similarity">
    <text evidence="1">Belongs to the class I-like SAM-binding methyltransferase superfamily. rRNA adenine N(6)-methyltransferase family. RsmA subfamily.</text>
</comment>
<organism>
    <name type="scientific">Mycolicibacterium paratuberculosis (strain ATCC BAA-968 / K-10)</name>
    <name type="common">Mycobacterium paratuberculosis</name>
    <dbReference type="NCBI Taxonomy" id="262316"/>
    <lineage>
        <taxon>Bacteria</taxon>
        <taxon>Bacillati</taxon>
        <taxon>Actinomycetota</taxon>
        <taxon>Actinomycetes</taxon>
        <taxon>Mycobacteriales</taxon>
        <taxon>Mycobacteriaceae</taxon>
        <taxon>Mycobacterium</taxon>
        <taxon>Mycobacterium avium complex (MAC)</taxon>
    </lineage>
</organism>
<reference key="1">
    <citation type="journal article" date="2005" name="Proc. Natl. Acad. Sci. U.S.A.">
        <title>The complete genome sequence of Mycobacterium avium subspecies paratuberculosis.</title>
        <authorList>
            <person name="Li L."/>
            <person name="Bannantine J.P."/>
            <person name="Zhang Q."/>
            <person name="Amonsin A."/>
            <person name="May B.J."/>
            <person name="Alt D."/>
            <person name="Banerji N."/>
            <person name="Kanjilal S."/>
            <person name="Kapur V."/>
        </authorList>
    </citation>
    <scope>NUCLEOTIDE SEQUENCE [LARGE SCALE GENOMIC DNA]</scope>
    <source>
        <strain>ATCC BAA-968 / K-10</strain>
    </source>
</reference>
<sequence length="318" mass="35099">MASVQRKSWCALTIRLLGRTEIRRLAKELEFRPRKSLGQNFVHDANTVRRVVSTSGVSRSDHVLEVGPGLGPLTLALLDRGAHVTAVEIDPVLAERLPHTVAEHSHSEIQRLTVLNRDVLTLRRDELAEPPTAVVANLPYNVAVPALLHLLAEFPSIRTVTVMVQAEVAERLAAEPGGKEYGVPSVKVRFFGRVRRCGMVSPTVFWPIPRVYSGLVRIDRYPTSPWPTDPAFRRQVFELVDIAFGQRRKTCRNAFVDWAGSGNESADRLLAASIDPARRGETLSIDDFVRLLQRSADRGGTDREGTSPPTAGQGAPAR</sequence>
<dbReference type="EC" id="2.1.1.182" evidence="1"/>
<dbReference type="EMBL" id="AE016958">
    <property type="protein sequence ID" value="AAS03292.1"/>
    <property type="molecule type" value="Genomic_DNA"/>
</dbReference>
<dbReference type="RefSeq" id="WP_010949048.1">
    <property type="nucleotide sequence ID" value="NZ_CP106873.1"/>
</dbReference>
<dbReference type="SMR" id="Q741W2"/>
<dbReference type="STRING" id="262316.MAP_0975"/>
<dbReference type="KEGG" id="mpa:MAP_0975"/>
<dbReference type="PATRIC" id="fig|262316.17.peg.1019"/>
<dbReference type="eggNOG" id="COG0030">
    <property type="taxonomic scope" value="Bacteria"/>
</dbReference>
<dbReference type="HOGENOM" id="CLU_041220_1_1_11"/>
<dbReference type="Proteomes" id="UP000000580">
    <property type="component" value="Chromosome"/>
</dbReference>
<dbReference type="GO" id="GO:0005829">
    <property type="term" value="C:cytosol"/>
    <property type="evidence" value="ECO:0007669"/>
    <property type="project" value="TreeGrafter"/>
</dbReference>
<dbReference type="GO" id="GO:0052908">
    <property type="term" value="F:16S rRNA (adenine(1518)-N(6)/adenine(1519)-N(6))-dimethyltransferase activity"/>
    <property type="evidence" value="ECO:0007669"/>
    <property type="project" value="UniProtKB-EC"/>
</dbReference>
<dbReference type="GO" id="GO:0003723">
    <property type="term" value="F:RNA binding"/>
    <property type="evidence" value="ECO:0007669"/>
    <property type="project" value="UniProtKB-KW"/>
</dbReference>
<dbReference type="CDD" id="cd02440">
    <property type="entry name" value="AdoMet_MTases"/>
    <property type="match status" value="1"/>
</dbReference>
<dbReference type="FunFam" id="1.10.8.100:FF:000003">
    <property type="entry name" value="Ribosomal RNA small subunit methyltransferase A"/>
    <property type="match status" value="1"/>
</dbReference>
<dbReference type="FunFam" id="3.40.50.150:FF:000023">
    <property type="entry name" value="Ribosomal RNA small subunit methyltransferase A"/>
    <property type="match status" value="1"/>
</dbReference>
<dbReference type="Gene3D" id="1.10.8.100">
    <property type="entry name" value="Ribosomal RNA adenine dimethylase-like, domain 2"/>
    <property type="match status" value="1"/>
</dbReference>
<dbReference type="Gene3D" id="3.40.50.150">
    <property type="entry name" value="Vaccinia Virus protein VP39"/>
    <property type="match status" value="1"/>
</dbReference>
<dbReference type="HAMAP" id="MF_00607">
    <property type="entry name" value="16SrRNA_methyltr_A"/>
    <property type="match status" value="1"/>
</dbReference>
<dbReference type="InterPro" id="IPR001737">
    <property type="entry name" value="KsgA/Erm"/>
</dbReference>
<dbReference type="InterPro" id="IPR023165">
    <property type="entry name" value="rRNA_Ade_diMease-like_C"/>
</dbReference>
<dbReference type="InterPro" id="IPR020596">
    <property type="entry name" value="rRNA_Ade_Mease_Trfase_CS"/>
</dbReference>
<dbReference type="InterPro" id="IPR020598">
    <property type="entry name" value="rRNA_Ade_methylase_Trfase_N"/>
</dbReference>
<dbReference type="InterPro" id="IPR011530">
    <property type="entry name" value="rRNA_adenine_dimethylase"/>
</dbReference>
<dbReference type="InterPro" id="IPR029063">
    <property type="entry name" value="SAM-dependent_MTases_sf"/>
</dbReference>
<dbReference type="NCBIfam" id="TIGR00755">
    <property type="entry name" value="ksgA"/>
    <property type="match status" value="1"/>
</dbReference>
<dbReference type="PANTHER" id="PTHR11727">
    <property type="entry name" value="DIMETHYLADENOSINE TRANSFERASE"/>
    <property type="match status" value="1"/>
</dbReference>
<dbReference type="PANTHER" id="PTHR11727:SF7">
    <property type="entry name" value="DIMETHYLADENOSINE TRANSFERASE-RELATED"/>
    <property type="match status" value="1"/>
</dbReference>
<dbReference type="Pfam" id="PF00398">
    <property type="entry name" value="RrnaAD"/>
    <property type="match status" value="1"/>
</dbReference>
<dbReference type="SMART" id="SM00650">
    <property type="entry name" value="rADc"/>
    <property type="match status" value="1"/>
</dbReference>
<dbReference type="SUPFAM" id="SSF53335">
    <property type="entry name" value="S-adenosyl-L-methionine-dependent methyltransferases"/>
    <property type="match status" value="1"/>
</dbReference>
<dbReference type="PROSITE" id="PS01131">
    <property type="entry name" value="RRNA_A_DIMETH"/>
    <property type="match status" value="1"/>
</dbReference>
<dbReference type="PROSITE" id="PS51689">
    <property type="entry name" value="SAM_RNA_A_N6_MT"/>
    <property type="match status" value="1"/>
</dbReference>
<keyword id="KW-0963">Cytoplasm</keyword>
<keyword id="KW-0489">Methyltransferase</keyword>
<keyword id="KW-1185">Reference proteome</keyword>
<keyword id="KW-0694">RNA-binding</keyword>
<keyword id="KW-0698">rRNA processing</keyword>
<keyword id="KW-0949">S-adenosyl-L-methionine</keyword>
<keyword id="KW-0808">Transferase</keyword>
<protein>
    <recommendedName>
        <fullName evidence="1">Ribosomal RNA small subunit methyltransferase A</fullName>
        <ecNumber evidence="1">2.1.1.182</ecNumber>
    </recommendedName>
    <alternativeName>
        <fullName evidence="1">16S rRNA (adenine(1518)-N(6)/adenine(1519)-N(6))-dimethyltransferase</fullName>
    </alternativeName>
    <alternativeName>
        <fullName evidence="1">16S rRNA dimethyladenosine transferase</fullName>
    </alternativeName>
    <alternativeName>
        <fullName evidence="1">16S rRNA dimethylase</fullName>
    </alternativeName>
    <alternativeName>
        <fullName evidence="1">S-adenosylmethionine-6-N', N'-adenosyl(rRNA) dimethyltransferase</fullName>
    </alternativeName>
</protein>